<keyword id="KW-0378">Hydrolase</keyword>
<keyword id="KW-0408">Iron</keyword>
<keyword id="KW-0479">Metal-binding</keyword>
<keyword id="KW-0547">Nucleotide-binding</keyword>
<protein>
    <recommendedName>
        <fullName evidence="1">Probable cyclic nucleotide phosphodiesterase CPS_4178</fullName>
        <ecNumber evidence="1">3.1.4.-</ecNumber>
    </recommendedName>
</protein>
<evidence type="ECO:0000250" key="1">
    <source>
        <dbReference type="UniProtKB" id="P9WP65"/>
    </source>
</evidence>
<evidence type="ECO:0000250" key="2">
    <source>
        <dbReference type="UniProtKB" id="Q6XBH1"/>
    </source>
</evidence>
<evidence type="ECO:0000305" key="3"/>
<evidence type="ECO:0000312" key="4">
    <source>
        <dbReference type="EMBL" id="AAZ26872.1"/>
    </source>
</evidence>
<gene>
    <name evidence="4" type="primary">icc</name>
    <name type="ordered locus">CPS_4178</name>
</gene>
<reference key="1">
    <citation type="journal article" date="2005" name="Proc. Natl. Acad. Sci. U.S.A.">
        <title>The psychrophilic lifestyle as revealed by the genome sequence of Colwellia psychrerythraea 34H through genomic and proteomic analyses.</title>
        <authorList>
            <person name="Methe B.A."/>
            <person name="Nelson K.E."/>
            <person name="Deming J.W."/>
            <person name="Momen B."/>
            <person name="Melamud E."/>
            <person name="Zhang X."/>
            <person name="Moult J."/>
            <person name="Madupu R."/>
            <person name="Nelson W.C."/>
            <person name="Dodson R.J."/>
            <person name="Brinkac L.M."/>
            <person name="Daugherty S.C."/>
            <person name="Durkin A.S."/>
            <person name="DeBoy R.T."/>
            <person name="Kolonay J.F."/>
            <person name="Sullivan S.A."/>
            <person name="Zhou L."/>
            <person name="Davidsen T.M."/>
            <person name="Wu M."/>
            <person name="Huston A.L."/>
            <person name="Lewis M."/>
            <person name="Weaver B."/>
            <person name="Weidman J.F."/>
            <person name="Khouri H."/>
            <person name="Utterback T.R."/>
            <person name="Feldblyum T.V."/>
            <person name="Fraser C.M."/>
        </authorList>
    </citation>
    <scope>NUCLEOTIDE SEQUENCE [LARGE SCALE GENOMIC DNA]</scope>
    <source>
        <strain>34H / ATCC BAA-681</strain>
    </source>
</reference>
<organism>
    <name type="scientific">Colwellia psychrerythraea (strain 34H / ATCC BAA-681)</name>
    <name type="common">Vibrio psychroerythus</name>
    <dbReference type="NCBI Taxonomy" id="167879"/>
    <lineage>
        <taxon>Bacteria</taxon>
        <taxon>Pseudomonadati</taxon>
        <taxon>Pseudomonadota</taxon>
        <taxon>Gammaproteobacteria</taxon>
        <taxon>Alteromonadales</taxon>
        <taxon>Colwelliaceae</taxon>
        <taxon>Colwellia</taxon>
    </lineage>
</organism>
<accession>Q47WJ3</accession>
<name>CNPD3_COLP3</name>
<proteinExistence type="inferred from homology"/>
<comment type="cofactor">
    <cofactor evidence="2">
        <name>Fe(2+)</name>
        <dbReference type="ChEBI" id="CHEBI:29033"/>
    </cofactor>
    <text evidence="2">Binds 2 Fe(2+) ions per subunit.</text>
</comment>
<comment type="similarity">
    <text evidence="3">Belongs to the cyclic nucleotide phosphodiesterase class-III family.</text>
</comment>
<feature type="chain" id="PRO_0000413365" description="Probable cyclic nucleotide phosphodiesterase CPS_4178">
    <location>
        <begin position="1"/>
        <end position="263"/>
    </location>
</feature>
<feature type="binding site" evidence="2">
    <location>
        <position position="21"/>
    </location>
    <ligand>
        <name>Fe cation</name>
        <dbReference type="ChEBI" id="CHEBI:24875"/>
        <label>1</label>
    </ligand>
</feature>
<feature type="binding site" evidence="1">
    <location>
        <position position="23"/>
    </location>
    <ligand>
        <name>AMP</name>
        <dbReference type="ChEBI" id="CHEBI:456215"/>
    </ligand>
</feature>
<feature type="binding site" evidence="2">
    <location>
        <position position="23"/>
    </location>
    <ligand>
        <name>Fe cation</name>
        <dbReference type="ChEBI" id="CHEBI:24875"/>
        <label>1</label>
    </ligand>
</feature>
<feature type="binding site" evidence="1">
    <location>
        <position position="62"/>
    </location>
    <ligand>
        <name>AMP</name>
        <dbReference type="ChEBI" id="CHEBI:456215"/>
    </ligand>
</feature>
<feature type="binding site" evidence="2">
    <location>
        <position position="62"/>
    </location>
    <ligand>
        <name>Fe cation</name>
        <dbReference type="ChEBI" id="CHEBI:24875"/>
        <label>1</label>
    </ligand>
</feature>
<feature type="binding site" evidence="2">
    <location>
        <position position="62"/>
    </location>
    <ligand>
        <name>Fe cation</name>
        <dbReference type="ChEBI" id="CHEBI:24875"/>
        <label>2</label>
    </ligand>
</feature>
<feature type="binding site" evidence="1">
    <location>
        <begin position="94"/>
        <end position="95"/>
    </location>
    <ligand>
        <name>AMP</name>
        <dbReference type="ChEBI" id="CHEBI:456215"/>
    </ligand>
</feature>
<feature type="binding site" evidence="2">
    <location>
        <position position="94"/>
    </location>
    <ligand>
        <name>Fe cation</name>
        <dbReference type="ChEBI" id="CHEBI:24875"/>
        <label>2</label>
    </ligand>
</feature>
<feature type="binding site" evidence="2">
    <location>
        <position position="160"/>
    </location>
    <ligand>
        <name>Fe cation</name>
        <dbReference type="ChEBI" id="CHEBI:24875"/>
        <label>2</label>
    </ligand>
</feature>
<feature type="binding site" evidence="2">
    <location>
        <position position="198"/>
    </location>
    <ligand>
        <name>Fe cation</name>
        <dbReference type="ChEBI" id="CHEBI:24875"/>
        <label>2</label>
    </ligand>
</feature>
<feature type="binding site" evidence="1">
    <location>
        <position position="200"/>
    </location>
    <ligand>
        <name>AMP</name>
        <dbReference type="ChEBI" id="CHEBI:456215"/>
    </ligand>
</feature>
<feature type="binding site" evidence="2">
    <location>
        <position position="200"/>
    </location>
    <ligand>
        <name>Fe cation</name>
        <dbReference type="ChEBI" id="CHEBI:24875"/>
        <label>1</label>
    </ligand>
</feature>
<sequence length="263" mass="29285">MTITEPYSPNNQPITFAQITDSHLFSSVDGLHHGHNVLANLKKVLLSICDNPSIKYIIFTGDLTQDHTEQSYQNFVDCVLECHITVPIYYLAGNHDEPKLLDKYFSASPFQADKEINLSHWQVQLVDSKSATPAGYVGEQALVKLKDAIQKNKNQLLMMHHHPIDVGYFIDKHGLQNKDAFWQVINSYDNIKAIACGHVHGDMTLTNAITSPINEPVVLYTCPATSIQFDPTVDGVAALSKGPGYRLFSLYADGQLNTEVVML</sequence>
<dbReference type="EC" id="3.1.4.-" evidence="1"/>
<dbReference type="EMBL" id="CP000083">
    <property type="protein sequence ID" value="AAZ26872.1"/>
    <property type="molecule type" value="Genomic_DNA"/>
</dbReference>
<dbReference type="RefSeq" id="WP_011044910.1">
    <property type="nucleotide sequence ID" value="NC_003910.7"/>
</dbReference>
<dbReference type="SMR" id="Q47WJ3"/>
<dbReference type="STRING" id="167879.CPS_4178"/>
<dbReference type="KEGG" id="cps:CPS_4178"/>
<dbReference type="HOGENOM" id="CLU_070320_0_0_6"/>
<dbReference type="Proteomes" id="UP000000547">
    <property type="component" value="Chromosome"/>
</dbReference>
<dbReference type="GO" id="GO:0004115">
    <property type="term" value="F:3',5'-cyclic-AMP phosphodiesterase activity"/>
    <property type="evidence" value="ECO:0007669"/>
    <property type="project" value="UniProtKB-EC"/>
</dbReference>
<dbReference type="GO" id="GO:0046872">
    <property type="term" value="F:metal ion binding"/>
    <property type="evidence" value="ECO:0007669"/>
    <property type="project" value="UniProtKB-KW"/>
</dbReference>
<dbReference type="GO" id="GO:0000166">
    <property type="term" value="F:nucleotide binding"/>
    <property type="evidence" value="ECO:0007669"/>
    <property type="project" value="UniProtKB-KW"/>
</dbReference>
<dbReference type="Gene3D" id="3.60.21.10">
    <property type="match status" value="1"/>
</dbReference>
<dbReference type="InterPro" id="IPR004843">
    <property type="entry name" value="Calcineurin-like_PHP_ApaH"/>
</dbReference>
<dbReference type="InterPro" id="IPR050884">
    <property type="entry name" value="CNP_phosphodiesterase-III"/>
</dbReference>
<dbReference type="InterPro" id="IPR029052">
    <property type="entry name" value="Metallo-depent_PP-like"/>
</dbReference>
<dbReference type="PANTHER" id="PTHR42988:SF2">
    <property type="entry name" value="CYCLIC NUCLEOTIDE PHOSPHODIESTERASE CBUA0032-RELATED"/>
    <property type="match status" value="1"/>
</dbReference>
<dbReference type="PANTHER" id="PTHR42988">
    <property type="entry name" value="PHOSPHOHYDROLASE"/>
    <property type="match status" value="1"/>
</dbReference>
<dbReference type="Pfam" id="PF00149">
    <property type="entry name" value="Metallophos"/>
    <property type="match status" value="1"/>
</dbReference>
<dbReference type="SUPFAM" id="SSF56300">
    <property type="entry name" value="Metallo-dependent phosphatases"/>
    <property type="match status" value="1"/>
</dbReference>